<sequence length="326" mass="35635">MASISSLNQIPCKTLQITSQYSKPTSKISTLPISSTNFPSKTELHRSISVKEFTNPKPKFTAQATNYDKEDEWGPEVEQIRPGGVAVVEEEPPKEPSEIELLKKQLADSLYGTNRGLSASSETRAEIVELITQLESKNPNPAPTEALTLLNGKWILAYTSFSGLFPLLSRGNLPLVRVEEISQTIDSESFTVQNSVVFAGPLATTSISTNAKFEVRSPKRVQIKFEEGIIGTPQLTDSIVLPENVEFLGQKIDLSPFKGLITSVQDTASSVAKSISSQPPIKFPITNNNAQSWLLTTYLDDELRISRGDAGSVFVLIKEGSPLLKP</sequence>
<dbReference type="EMBL" id="Y15269">
    <property type="protein sequence ID" value="CAA75558.1"/>
    <property type="molecule type" value="mRNA"/>
</dbReference>
<dbReference type="PIR" id="T07825">
    <property type="entry name" value="T07825"/>
</dbReference>
<dbReference type="RefSeq" id="NP_001275061.1">
    <property type="nucleotide sequence ID" value="NM_001288132.1"/>
</dbReference>
<dbReference type="SMR" id="P80471"/>
<dbReference type="FunCoup" id="P80471">
    <property type="interactions" value="663"/>
</dbReference>
<dbReference type="STRING" id="4113.P80471"/>
<dbReference type="PaxDb" id="4113-PGSC0003DMT400043112"/>
<dbReference type="GeneID" id="102584168"/>
<dbReference type="KEGG" id="sot:102584168"/>
<dbReference type="eggNOG" id="ENOG502QS2T">
    <property type="taxonomic scope" value="Eukaryota"/>
</dbReference>
<dbReference type="InParanoid" id="P80471"/>
<dbReference type="OrthoDB" id="498392at2759"/>
<dbReference type="Proteomes" id="UP000011115">
    <property type="component" value="Unassembled WGS sequence"/>
</dbReference>
<dbReference type="ExpressionAtlas" id="P80471">
    <property type="expression patterns" value="baseline"/>
</dbReference>
<dbReference type="GO" id="GO:0009535">
    <property type="term" value="C:chloroplast thylakoid membrane"/>
    <property type="evidence" value="ECO:0000314"/>
    <property type="project" value="UniProtKB"/>
</dbReference>
<dbReference type="GO" id="GO:0009414">
    <property type="term" value="P:response to water deprivation"/>
    <property type="evidence" value="ECO:0000270"/>
    <property type="project" value="UniProtKB"/>
</dbReference>
<dbReference type="InterPro" id="IPR039633">
    <property type="entry name" value="PAP"/>
</dbReference>
<dbReference type="InterPro" id="IPR006843">
    <property type="entry name" value="PAP/fibrillin_dom"/>
</dbReference>
<dbReference type="PANTHER" id="PTHR31906">
    <property type="entry name" value="PLASTID-LIPID-ASSOCIATED PROTEIN 4, CHLOROPLASTIC-RELATED"/>
    <property type="match status" value="1"/>
</dbReference>
<dbReference type="Pfam" id="PF04755">
    <property type="entry name" value="PAP_fibrillin"/>
    <property type="match status" value="1"/>
</dbReference>
<feature type="transit peptide" description="Chloroplast" evidence="2">
    <location>
        <begin position="1"/>
        <end position="63"/>
    </location>
</feature>
<feature type="chain" id="PRO_0000021598" description="Light-induced protein, chloroplastic">
    <location>
        <begin position="64"/>
        <end position="326"/>
    </location>
</feature>
<feature type="sequence conflict" description="In Ref. 2; AA sequence." evidence="4" ref="2">
    <original>T</original>
    <variation>I</variation>
    <location>
        <position position="286"/>
    </location>
</feature>
<evidence type="ECO:0000250" key="1"/>
<evidence type="ECO:0000269" key="2">
    <source>
    </source>
</evidence>
<evidence type="ECO:0000269" key="3">
    <source>
    </source>
</evidence>
<evidence type="ECO:0000305" key="4"/>
<organism>
    <name type="scientific">Solanum tuberosum</name>
    <name type="common">Potato</name>
    <dbReference type="NCBI Taxonomy" id="4113"/>
    <lineage>
        <taxon>Eukaryota</taxon>
        <taxon>Viridiplantae</taxon>
        <taxon>Streptophyta</taxon>
        <taxon>Embryophyta</taxon>
        <taxon>Tracheophyta</taxon>
        <taxon>Spermatophyta</taxon>
        <taxon>Magnoliopsida</taxon>
        <taxon>eudicotyledons</taxon>
        <taxon>Gunneridae</taxon>
        <taxon>Pentapetalae</taxon>
        <taxon>asterids</taxon>
        <taxon>lamiids</taxon>
        <taxon>Solanales</taxon>
        <taxon>Solanaceae</taxon>
        <taxon>Solanoideae</taxon>
        <taxon>Solaneae</taxon>
        <taxon>Solanum</taxon>
    </lineage>
</organism>
<keyword id="KW-0150">Chloroplast</keyword>
<keyword id="KW-0903">Direct protein sequencing</keyword>
<keyword id="KW-0472">Membrane</keyword>
<keyword id="KW-0934">Plastid</keyword>
<keyword id="KW-1185">Reference proteome</keyword>
<keyword id="KW-0793">Thylakoid</keyword>
<keyword id="KW-0809">Transit peptide</keyword>
<accession>P80471</accession>
<accession>O24392</accession>
<proteinExistence type="evidence at protein level"/>
<reference key="1">
    <citation type="journal article" date="1998" name="Plant J.">
        <title>Molecular characterization of CDSP 34, a chloroplastic protein induced by water deficit in Solanum tuberosum L. plants, and regulation of CDSP 34 expression by ABA and high illumination.</title>
        <authorList>
            <person name="Gillet B."/>
            <person name="Beyly A."/>
            <person name="Peltier G."/>
            <person name="Rey P."/>
        </authorList>
    </citation>
    <scope>NUCLEOTIDE SEQUENCE [MRNA]</scope>
    <scope>TISSUE SPECIFICITY</scope>
    <scope>INDUCTION</scope>
    <source>
        <strain>cv. Haig</strain>
    </source>
</reference>
<reference key="2">
    <citation type="journal article" date="1996" name="Planta">
        <title>Characterization of a novel drought-induced 34-kDa protein located in the thylakoids of Solanum tuberosum L. plants.</title>
        <authorList>
            <person name="Pruvot G."/>
            <person name="Cuine S."/>
            <person name="Peltier G."/>
            <person name="Rey P."/>
        </authorList>
    </citation>
    <scope>PROTEIN SEQUENCE OF 64-80 AND 274-290</scope>
    <scope>SUBCELLULAR LOCATION</scope>
    <source>
        <strain>cv. Haig</strain>
    </source>
</reference>
<comment type="function">
    <text>Required for normal plant growth. May be both photoprotective and play an ancillary role in photosynthesis. May structurally stabilize thylakoids during osmotic and oxidative stress.</text>
</comment>
<comment type="subunit">
    <text evidence="1">Associates with the major light-harvesting antenna complex polypeptides of the PSII oxygen-evolving complex.</text>
</comment>
<comment type="subcellular location">
    <subcellularLocation>
        <location evidence="2">Plastid</location>
        <location evidence="2">Chloroplast thylakoid membrane</location>
    </subcellularLocation>
</comment>
<comment type="tissue specificity">
    <text evidence="3">Expressed in leaves.</text>
</comment>
<comment type="induction">
    <text evidence="3">By high illumination, water stress and abscisic acid.</text>
</comment>
<comment type="similarity">
    <text evidence="4">Belongs to the LIPC family.</text>
</comment>
<name>LIPC_SOLTU</name>
<protein>
    <recommendedName>
        <fullName>Light-induced protein, chloroplastic</fullName>
    </recommendedName>
    <alternativeName>
        <fullName>Drought-induced stress protein CDSP-34</fullName>
    </alternativeName>
</protein>